<dbReference type="EMBL" id="X71337">
    <property type="protein sequence ID" value="CAA50477.1"/>
    <property type="molecule type" value="Genomic_DNA"/>
</dbReference>
<dbReference type="EMBL" id="AF215714">
    <property type="protein sequence ID" value="AAF34633.1"/>
    <property type="molecule type" value="Genomic_DNA"/>
</dbReference>
<dbReference type="PIR" id="S33334">
    <property type="entry name" value="S33334"/>
</dbReference>
<dbReference type="RefSeq" id="XP_054309602.1">
    <property type="nucleotide sequence ID" value="XM_054453627.1"/>
</dbReference>
<dbReference type="GeneID" id="129015521"/>
<dbReference type="GO" id="GO:0000786">
    <property type="term" value="C:nucleosome"/>
    <property type="evidence" value="ECO:0007669"/>
    <property type="project" value="UniProtKB-KW"/>
</dbReference>
<dbReference type="GO" id="GO:0005634">
    <property type="term" value="C:nucleus"/>
    <property type="evidence" value="ECO:0007669"/>
    <property type="project" value="UniProtKB-SubCell"/>
</dbReference>
<dbReference type="GO" id="GO:0003677">
    <property type="term" value="F:DNA binding"/>
    <property type="evidence" value="ECO:0007669"/>
    <property type="project" value="UniProtKB-KW"/>
</dbReference>
<dbReference type="GO" id="GO:0030261">
    <property type="term" value="P:chromosome condensation"/>
    <property type="evidence" value="ECO:0007669"/>
    <property type="project" value="UniProtKB-KW"/>
</dbReference>
<dbReference type="GO" id="GO:0006997">
    <property type="term" value="P:nucleus organization"/>
    <property type="evidence" value="ECO:0007669"/>
    <property type="project" value="TreeGrafter"/>
</dbReference>
<dbReference type="GO" id="GO:0007286">
    <property type="term" value="P:spermatid development"/>
    <property type="evidence" value="ECO:0007669"/>
    <property type="project" value="InterPro"/>
</dbReference>
<dbReference type="GO" id="GO:0007283">
    <property type="term" value="P:spermatogenesis"/>
    <property type="evidence" value="ECO:0000250"/>
    <property type="project" value="UniProtKB"/>
</dbReference>
<dbReference type="InterPro" id="IPR000492">
    <property type="entry name" value="PRM2"/>
</dbReference>
<dbReference type="PANTHER" id="PTHR21341">
    <property type="entry name" value="PROTAMINE-2"/>
    <property type="match status" value="1"/>
</dbReference>
<dbReference type="PANTHER" id="PTHR21341:SF2">
    <property type="entry name" value="PROTAMINE-2"/>
    <property type="match status" value="1"/>
</dbReference>
<dbReference type="Pfam" id="PF00841">
    <property type="entry name" value="Protamine_P2"/>
    <property type="match status" value="1"/>
</dbReference>
<comment type="function">
    <text evidence="1">Protamines substitute for histones in the chromatin of sperm during the haploid phase of spermatogenesis. They compact sperm DNA into a highly condensed, stable and inactive complex.</text>
</comment>
<comment type="subunit">
    <text evidence="1">Interacts with TDRP.</text>
</comment>
<comment type="subcellular location">
    <subcellularLocation>
        <location evidence="1">Nucleus</location>
    </subcellularLocation>
    <subcellularLocation>
        <location evidence="1">Chromosome</location>
    </subcellularLocation>
</comment>
<comment type="tissue specificity">
    <text>Testis.</text>
</comment>
<comment type="PTM">
    <text evidence="1">Proteolytic processing into mature chains is required for histone eviction during spermatogenesis. Transition proteins (TNP1 and TNP2) are required for processing.</text>
</comment>
<comment type="similarity">
    <text evidence="4">Belongs to the protamine P2 family.</text>
</comment>
<organism>
    <name type="scientific">Pongo pygmaeus</name>
    <name type="common">Bornean orangutan</name>
    <dbReference type="NCBI Taxonomy" id="9600"/>
    <lineage>
        <taxon>Eukaryota</taxon>
        <taxon>Metazoa</taxon>
        <taxon>Chordata</taxon>
        <taxon>Craniata</taxon>
        <taxon>Vertebrata</taxon>
        <taxon>Euteleostomi</taxon>
        <taxon>Mammalia</taxon>
        <taxon>Eutheria</taxon>
        <taxon>Euarchontoglires</taxon>
        <taxon>Primates</taxon>
        <taxon>Haplorrhini</taxon>
        <taxon>Catarrhini</taxon>
        <taxon>Hominidae</taxon>
        <taxon>Pongo</taxon>
    </lineage>
</organism>
<proteinExistence type="evidence at transcript level"/>
<keyword id="KW-0158">Chromosome</keyword>
<keyword id="KW-0217">Developmental protein</keyword>
<keyword id="KW-0221">Differentiation</keyword>
<keyword id="KW-0226">DNA condensation</keyword>
<keyword id="KW-0238">DNA-binding</keyword>
<keyword id="KW-0544">Nucleosome core</keyword>
<keyword id="KW-0539">Nucleus</keyword>
<keyword id="KW-0597">Phosphoprotein</keyword>
<keyword id="KW-0744">Spermatogenesis</keyword>
<feature type="chain" id="PRO_0000191606" description="Protamine-2">
    <location>
        <begin position="1"/>
        <end position="102"/>
    </location>
</feature>
<feature type="region of interest" description="Disordered" evidence="3">
    <location>
        <begin position="15"/>
        <end position="41"/>
    </location>
</feature>
<feature type="region of interest" description="Disordered" evidence="3">
    <location>
        <begin position="66"/>
        <end position="102"/>
    </location>
</feature>
<feature type="modified residue" description="Phosphoserine" evidence="2">
    <location>
        <position position="8"/>
    </location>
</feature>
<feature type="modified residue" description="Phosphoserine" evidence="2">
    <location>
        <position position="10"/>
    </location>
</feature>
<feature type="modified residue" description="Phosphoserine" evidence="2">
    <location>
        <position position="37"/>
    </location>
</feature>
<feature type="sequence conflict" description="In Ref. 3; AAF34633." evidence="4" ref="3">
    <original>H</original>
    <variation>Q</variation>
    <location>
        <position position="50"/>
    </location>
</feature>
<reference key="1">
    <citation type="journal article" date="1993" name="Eur. J. Biochem.">
        <title>Evolution of pro-protamine P2 genes in primates.</title>
        <authorList>
            <person name="Retief J.D."/>
            <person name="Dixon G.H."/>
        </authorList>
    </citation>
    <scope>NUCLEOTIDE SEQUENCE [GENOMIC DNA]</scope>
</reference>
<reference key="2">
    <citation type="journal article" date="1993" name="Eur. J. Biochem.">
        <authorList>
            <person name="Retief J.D."/>
            <person name="Dixon G.H."/>
        </authorList>
    </citation>
    <scope>ERRATUM OF PUBMED:8513810</scope>
</reference>
<reference key="3">
    <citation type="journal article" date="2000" name="Nature">
        <title>Rapid evolution of male reproductive genes in the descent of man.</title>
        <authorList>
            <person name="Wyckoff G.J."/>
            <person name="Wang W."/>
            <person name="Wu C.-I."/>
        </authorList>
    </citation>
    <scope>NUCLEOTIDE SEQUENCE [GENOMIC DNA]</scope>
</reference>
<gene>
    <name type="primary">PRM2</name>
</gene>
<evidence type="ECO:0000250" key="1">
    <source>
        <dbReference type="UniProtKB" id="P07978"/>
    </source>
</evidence>
<evidence type="ECO:0000250" key="2">
    <source>
        <dbReference type="UniProtKB" id="P11248"/>
    </source>
</evidence>
<evidence type="ECO:0000256" key="3">
    <source>
        <dbReference type="SAM" id="MobiDB-lite"/>
    </source>
</evidence>
<evidence type="ECO:0000305" key="4"/>
<sequence length="102" mass="12900">MVRYCVRSLSERSHEVYGQQLHGQEQGHHDQEEQGLSPEQVEVYERTQGHSHYRRRHCSRRRLHRIHRQQHRSCKRRRRHSCRHRRKHRRGCRTRRRTCRRH</sequence>
<protein>
    <recommendedName>
        <fullName>Protamine-2</fullName>
    </recommendedName>
    <alternativeName>
        <fullName>Sperm histone P2</fullName>
    </alternativeName>
    <alternativeName>
        <fullName>Sperm protamine P2</fullName>
    </alternativeName>
</protein>
<name>PRM2_PONPY</name>
<accession>P35301</accession>
<accession>Q9N1A8</accession>